<reference key="1">
    <citation type="journal article" date="2001" name="Nature">
        <title>Genome sequence of enterohaemorrhagic Escherichia coli O157:H7.</title>
        <authorList>
            <person name="Perna N.T."/>
            <person name="Plunkett G. III"/>
            <person name="Burland V."/>
            <person name="Mau B."/>
            <person name="Glasner J.D."/>
            <person name="Rose D.J."/>
            <person name="Mayhew G.F."/>
            <person name="Evans P.S."/>
            <person name="Gregor J."/>
            <person name="Kirkpatrick H.A."/>
            <person name="Posfai G."/>
            <person name="Hackett J."/>
            <person name="Klink S."/>
            <person name="Boutin A."/>
            <person name="Shao Y."/>
            <person name="Miller L."/>
            <person name="Grotbeck E.J."/>
            <person name="Davis N.W."/>
            <person name="Lim A."/>
            <person name="Dimalanta E.T."/>
            <person name="Potamousis K."/>
            <person name="Apodaca J."/>
            <person name="Anantharaman T.S."/>
            <person name="Lin J."/>
            <person name="Yen G."/>
            <person name="Schwartz D.C."/>
            <person name="Welch R.A."/>
            <person name="Blattner F.R."/>
        </authorList>
    </citation>
    <scope>NUCLEOTIDE SEQUENCE [LARGE SCALE GENOMIC DNA]</scope>
    <source>
        <strain>O157:H7 / EDL933 / ATCC 700927 / EHEC</strain>
    </source>
</reference>
<reference key="2">
    <citation type="journal article" date="2001" name="DNA Res.">
        <title>Complete genome sequence of enterohemorrhagic Escherichia coli O157:H7 and genomic comparison with a laboratory strain K-12.</title>
        <authorList>
            <person name="Hayashi T."/>
            <person name="Makino K."/>
            <person name="Ohnishi M."/>
            <person name="Kurokawa K."/>
            <person name="Ishii K."/>
            <person name="Yokoyama K."/>
            <person name="Han C.-G."/>
            <person name="Ohtsubo E."/>
            <person name="Nakayama K."/>
            <person name="Murata T."/>
            <person name="Tanaka M."/>
            <person name="Tobe T."/>
            <person name="Iida T."/>
            <person name="Takami H."/>
            <person name="Honda T."/>
            <person name="Sasakawa C."/>
            <person name="Ogasawara N."/>
            <person name="Yasunaga T."/>
            <person name="Kuhara S."/>
            <person name="Shiba T."/>
            <person name="Hattori M."/>
            <person name="Shinagawa H."/>
        </authorList>
    </citation>
    <scope>NUCLEOTIDE SEQUENCE [LARGE SCALE GENOMIC DNA]</scope>
    <source>
        <strain>O157:H7 / Sakai / RIMD 0509952 / EHEC</strain>
    </source>
</reference>
<protein>
    <recommendedName>
        <fullName evidence="1">Protein DsrB</fullName>
    </recommendedName>
</protein>
<gene>
    <name evidence="1" type="primary">dsrB</name>
    <name type="ordered locus">Z3042</name>
    <name type="ordered locus">ECs2691</name>
</gene>
<comment type="similarity">
    <text evidence="1">Belongs to the DsrB family.</text>
</comment>
<proteinExistence type="inferred from homology"/>
<name>DSRB_ECO57</name>
<dbReference type="EMBL" id="AE005174">
    <property type="protein sequence ID" value="AAG56967.1"/>
    <property type="molecule type" value="Genomic_DNA"/>
</dbReference>
<dbReference type="EMBL" id="BA000007">
    <property type="protein sequence ID" value="BAB36114.1"/>
    <property type="molecule type" value="Genomic_DNA"/>
</dbReference>
<dbReference type="PIR" id="C85813">
    <property type="entry name" value="C85813"/>
</dbReference>
<dbReference type="PIR" id="C90965">
    <property type="entry name" value="C90965"/>
</dbReference>
<dbReference type="RefSeq" id="NP_310718.1">
    <property type="nucleotide sequence ID" value="NC_002695.1"/>
</dbReference>
<dbReference type="RefSeq" id="WP_000867217.1">
    <property type="nucleotide sequence ID" value="NZ_VOAI01000028.1"/>
</dbReference>
<dbReference type="SMR" id="P0AEH0"/>
<dbReference type="STRING" id="155864.Z3042"/>
<dbReference type="GeneID" id="912856"/>
<dbReference type="GeneID" id="93775233"/>
<dbReference type="KEGG" id="ece:Z3042"/>
<dbReference type="KEGG" id="ecs:ECs_2691"/>
<dbReference type="PATRIC" id="fig|386585.9.peg.2819"/>
<dbReference type="eggNOG" id="ENOG5032ZW5">
    <property type="taxonomic scope" value="Bacteria"/>
</dbReference>
<dbReference type="HOGENOM" id="CLU_189289_0_0_6"/>
<dbReference type="OMA" id="IWFFNEL"/>
<dbReference type="Proteomes" id="UP000000558">
    <property type="component" value="Chromosome"/>
</dbReference>
<dbReference type="Proteomes" id="UP000002519">
    <property type="component" value="Chromosome"/>
</dbReference>
<dbReference type="HAMAP" id="MF_01549">
    <property type="entry name" value="DsrB"/>
    <property type="match status" value="1"/>
</dbReference>
<dbReference type="InterPro" id="IPR019717">
    <property type="entry name" value="Dextransucrase_DSRB"/>
</dbReference>
<dbReference type="NCBIfam" id="NF007981">
    <property type="entry name" value="PRK10708.1"/>
    <property type="match status" value="1"/>
</dbReference>
<dbReference type="Pfam" id="PF10781">
    <property type="entry name" value="DSRB"/>
    <property type="match status" value="1"/>
</dbReference>
<organism>
    <name type="scientific">Escherichia coli O157:H7</name>
    <dbReference type="NCBI Taxonomy" id="83334"/>
    <lineage>
        <taxon>Bacteria</taxon>
        <taxon>Pseudomonadati</taxon>
        <taxon>Pseudomonadota</taxon>
        <taxon>Gammaproteobacteria</taxon>
        <taxon>Enterobacterales</taxon>
        <taxon>Enterobacteriaceae</taxon>
        <taxon>Escherichia</taxon>
    </lineage>
</organism>
<feature type="chain" id="PRO_0000201908" description="Protein DsrB">
    <location>
        <begin position="1"/>
        <end position="62"/>
    </location>
</feature>
<keyword id="KW-1185">Reference proteome</keyword>
<evidence type="ECO:0000255" key="1">
    <source>
        <dbReference type="HAMAP-Rule" id="MF_01549"/>
    </source>
</evidence>
<accession>P0AEH0</accession>
<accession>P40678</accession>
<sequence length="62" mass="6946">MKVNDRVTVKTDGGPRRPGVVLAVEEFSEGTMYLVSLEDYPLGIWFFNEAGHQDGIFVEKAE</sequence>